<organism>
    <name type="scientific">Mycolicibacterium smegmatis (strain ATCC 700084 / mc(2)155)</name>
    <name type="common">Mycobacterium smegmatis</name>
    <dbReference type="NCBI Taxonomy" id="246196"/>
    <lineage>
        <taxon>Bacteria</taxon>
        <taxon>Bacillati</taxon>
        <taxon>Actinomycetota</taxon>
        <taxon>Actinomycetes</taxon>
        <taxon>Mycobacteriales</taxon>
        <taxon>Mycobacteriaceae</taxon>
        <taxon>Mycolicibacterium</taxon>
    </lineage>
</organism>
<evidence type="ECO:0000255" key="1"/>
<evidence type="ECO:0000269" key="2">
    <source>
    </source>
</evidence>
<evidence type="ECO:0000305" key="3"/>
<keyword id="KW-0067">ATP-binding</keyword>
<keyword id="KW-0436">Ligase</keyword>
<keyword id="KW-0547">Nucleotide-binding</keyword>
<keyword id="KW-1185">Reference proteome</keyword>
<sequence>MSPRSKSQLRTALLQNRRSVPEAVREGEAEALRGWLSGLKISGRTVCAYVPVGSEPGSIALLDTLLELGARVLLPVARNDAAGIPLPLQWGKYRPGTLVAAEFGLREPPPPWLPAETIGEADVILVPALAVDRSGARLGRGAGFYDRTLHHAAATAQVIAVVRDDELLDEIPAEPHDVAMTHVLTPKRGIVALR</sequence>
<dbReference type="EC" id="6.3.3.2"/>
<dbReference type="EMBL" id="CP000480">
    <property type="protein sequence ID" value="ABK72547.1"/>
    <property type="molecule type" value="Genomic_DNA"/>
</dbReference>
<dbReference type="EMBL" id="CP001663">
    <property type="protein sequence ID" value="AFP41763.1"/>
    <property type="molecule type" value="Genomic_DNA"/>
</dbReference>
<dbReference type="RefSeq" id="YP_889710.1">
    <property type="nucleotide sequence ID" value="NC_008596.1"/>
</dbReference>
<dbReference type="SMR" id="A0R3H2"/>
<dbReference type="STRING" id="246196.MSMEG_5472"/>
<dbReference type="PaxDb" id="246196-MSMEI_5322"/>
<dbReference type="KEGG" id="msb:LJ00_27045"/>
<dbReference type="KEGG" id="msg:MSMEI_5322"/>
<dbReference type="KEGG" id="msm:MSMEG_5472"/>
<dbReference type="PATRIC" id="fig|246196.19.peg.5331"/>
<dbReference type="eggNOG" id="COG0212">
    <property type="taxonomic scope" value="Bacteria"/>
</dbReference>
<dbReference type="OrthoDB" id="3242798at2"/>
<dbReference type="BRENDA" id="6.3.3.2">
    <property type="organism ID" value="3512"/>
</dbReference>
<dbReference type="UniPathway" id="UPA00193"/>
<dbReference type="Proteomes" id="UP000000757">
    <property type="component" value="Chromosome"/>
</dbReference>
<dbReference type="Proteomes" id="UP000006158">
    <property type="component" value="Chromosome"/>
</dbReference>
<dbReference type="GO" id="GO:0030272">
    <property type="term" value="F:5-formyltetrahydrofolate cyclo-ligase activity"/>
    <property type="evidence" value="ECO:0007669"/>
    <property type="project" value="UniProtKB-EC"/>
</dbReference>
<dbReference type="GO" id="GO:0005524">
    <property type="term" value="F:ATP binding"/>
    <property type="evidence" value="ECO:0007669"/>
    <property type="project" value="UniProtKB-KW"/>
</dbReference>
<dbReference type="GO" id="GO:0009396">
    <property type="term" value="P:folic acid-containing compound biosynthetic process"/>
    <property type="evidence" value="ECO:0007669"/>
    <property type="project" value="TreeGrafter"/>
</dbReference>
<dbReference type="GO" id="GO:0035999">
    <property type="term" value="P:tetrahydrofolate interconversion"/>
    <property type="evidence" value="ECO:0007669"/>
    <property type="project" value="UniProtKB-UniPathway"/>
</dbReference>
<dbReference type="Gene3D" id="3.40.50.10420">
    <property type="entry name" value="NagB/RpiA/CoA transferase-like"/>
    <property type="match status" value="1"/>
</dbReference>
<dbReference type="InterPro" id="IPR002698">
    <property type="entry name" value="FTHF_cligase"/>
</dbReference>
<dbReference type="InterPro" id="IPR024185">
    <property type="entry name" value="FTHF_cligase-like_sf"/>
</dbReference>
<dbReference type="InterPro" id="IPR037171">
    <property type="entry name" value="NagB/RpiA_transferase-like"/>
</dbReference>
<dbReference type="NCBIfam" id="TIGR02727">
    <property type="entry name" value="MTHFS_bact"/>
    <property type="match status" value="1"/>
</dbReference>
<dbReference type="PANTHER" id="PTHR23407:SF1">
    <property type="entry name" value="5-FORMYLTETRAHYDROFOLATE CYCLO-LIGASE"/>
    <property type="match status" value="1"/>
</dbReference>
<dbReference type="PANTHER" id="PTHR23407">
    <property type="entry name" value="ATPASE INHIBITOR/5-FORMYLTETRAHYDROFOLATE CYCLO-LIGASE"/>
    <property type="match status" value="1"/>
</dbReference>
<dbReference type="Pfam" id="PF01812">
    <property type="entry name" value="5-FTHF_cyc-lig"/>
    <property type="match status" value="1"/>
</dbReference>
<dbReference type="PIRSF" id="PIRSF006806">
    <property type="entry name" value="FTHF_cligase"/>
    <property type="match status" value="1"/>
</dbReference>
<dbReference type="SUPFAM" id="SSF100950">
    <property type="entry name" value="NagB/RpiA/CoA transferase-like"/>
    <property type="match status" value="1"/>
</dbReference>
<name>5FCL_MYCS2</name>
<protein>
    <recommendedName>
        <fullName>5-formyltetrahydrofolate cyclo-ligase</fullName>
        <shortName>5-FCL</shortName>
        <ecNumber>6.3.3.2</ecNumber>
    </recommendedName>
    <alternativeName>
        <fullName>5,10-methenyltetrahydrofolate synthetase</fullName>
        <shortName>MTHFS</shortName>
    </alternativeName>
</protein>
<accession>A0R3H2</accession>
<gene>
    <name type="ordered locus">MSMEG_5472</name>
    <name type="ordered locus">MSMEI_5322</name>
</gene>
<comment type="function">
    <text evidence="2">Involved in the removal of 5-formyltetrahydrofolate. In vitro, it is a potent inhibitor of various folate-dependent enzymes in the C1 metabolism network and in vivo it might function as a folate storage. 5-formyltetrahydrofolate is also used as an antifolate rescue agent in cancer chemotherapy. Catalyzes the irreversible ATP-dependent transformation of 5-formyltetrahydrofolate (5-CHO-THF) to form 5,10-methenyltetrahydrofolate (5,10-CH=THF). The reverse reaction is catalyzed by the serine hydroxymethyltransferase GlyA (SHMT).</text>
</comment>
<comment type="catalytic activity">
    <reaction evidence="2">
        <text>(6S)-5-formyl-5,6,7,8-tetrahydrofolate + ATP = (6R)-5,10-methenyltetrahydrofolate + ADP + phosphate</text>
        <dbReference type="Rhea" id="RHEA:10488"/>
        <dbReference type="ChEBI" id="CHEBI:30616"/>
        <dbReference type="ChEBI" id="CHEBI:43474"/>
        <dbReference type="ChEBI" id="CHEBI:57455"/>
        <dbReference type="ChEBI" id="CHEBI:57457"/>
        <dbReference type="ChEBI" id="CHEBI:456216"/>
        <dbReference type="EC" id="6.3.3.2"/>
    </reaction>
</comment>
<comment type="pathway">
    <text>One-carbon metabolism; tetrahydrofolate interconversion.</text>
</comment>
<comment type="disruption phenotype">
    <text evidence="2">Cells lacking this gene lead to an accumulation of 5-CHO-THF. This mutant becomes more susceptible to antifolates that inhibit folate biosynthesis (sulfonamides) or reduction (trimethoprim).</text>
</comment>
<comment type="similarity">
    <text evidence="3">Belongs to the 5-formyltetrahydrofolate cyclo-ligase family.</text>
</comment>
<reference key="1">
    <citation type="journal article" date="2006" name="Nucleic Acids Res.">
        <title>ICDS database: interrupted CoDing sequences in prokaryotic genomes.</title>
        <authorList>
            <person name="Perrodou E."/>
            <person name="Deshayes C."/>
            <person name="Muller J."/>
            <person name="Schaeffer C."/>
            <person name="Van Dorsselaer A."/>
            <person name="Ripp R."/>
            <person name="Poch O."/>
            <person name="Reyrat J.M."/>
            <person name="Lecompte O."/>
        </authorList>
    </citation>
    <scope>NUCLEOTIDE SEQUENCE [GENOMIC DNA]</scope>
    <source>
        <strain>ATCC 700084 / mc(2)155</strain>
    </source>
</reference>
<reference key="2">
    <citation type="submission" date="2006-10" db="EMBL/GenBank/DDBJ databases">
        <authorList>
            <person name="Fleischmann R.D."/>
            <person name="Dodson R.J."/>
            <person name="Haft D.H."/>
            <person name="Merkel J.S."/>
            <person name="Nelson W.C."/>
            <person name="Fraser C.M."/>
        </authorList>
    </citation>
    <scope>NUCLEOTIDE SEQUENCE [LARGE SCALE GENOMIC DNA]</scope>
    <source>
        <strain>ATCC 700084 / mc(2)155</strain>
    </source>
</reference>
<reference key="3">
    <citation type="journal article" date="2007" name="Genome Biol.">
        <title>Interrupted coding sequences in Mycobacterium smegmatis: authentic mutations or sequencing errors?</title>
        <authorList>
            <person name="Deshayes C."/>
            <person name="Perrodou E."/>
            <person name="Gallien S."/>
            <person name="Euphrasie D."/>
            <person name="Schaeffer C."/>
            <person name="Van-Dorsselaer A."/>
            <person name="Poch O."/>
            <person name="Lecompte O."/>
            <person name="Reyrat J.-M."/>
        </authorList>
    </citation>
    <scope>NUCLEOTIDE SEQUENCE [LARGE SCALE GENOMIC DNA]</scope>
    <source>
        <strain>ATCC 700084 / mc(2)155</strain>
    </source>
</reference>
<reference key="4">
    <citation type="journal article" date="2009" name="Genome Res.">
        <title>Ortho-proteogenomics: multiple proteomes investigation through orthology and a new MS-based protocol.</title>
        <authorList>
            <person name="Gallien S."/>
            <person name="Perrodou E."/>
            <person name="Carapito C."/>
            <person name="Deshayes C."/>
            <person name="Reyrat J.-M."/>
            <person name="Van Dorsselaer A."/>
            <person name="Poch O."/>
            <person name="Schaeffer C."/>
            <person name="Lecompte O."/>
        </authorList>
    </citation>
    <scope>NUCLEOTIDE SEQUENCE [LARGE SCALE GENOMIC DNA]</scope>
    <source>
        <strain>ATCC 700084 / mc(2)155</strain>
    </source>
</reference>
<reference key="5">
    <citation type="journal article" date="2011" name="J. Biol. Chem.">
        <title>Bacterial conversion of folinic acid is required for antifolate resistance.</title>
        <authorList>
            <person name="Ogwang S."/>
            <person name="Nguyen H.T."/>
            <person name="Sherman M."/>
            <person name="Bajaksouzian S."/>
            <person name="Jacobs M.R."/>
            <person name="Boom W.H."/>
            <person name="Zhang G.F."/>
            <person name="Nguyen L."/>
        </authorList>
    </citation>
    <scope>FUNCTION</scope>
    <scope>CATALYTIC ACTIVITY</scope>
    <scope>DISRUPTION PHENOTYPE</scope>
    <source>
        <strain>ATCC 700084 / mc(2)155</strain>
    </source>
</reference>
<proteinExistence type="evidence at protein level"/>
<feature type="chain" id="PRO_0000430014" description="5-formyltetrahydrofolate cyclo-ligase">
    <location>
        <begin position="1"/>
        <end position="194"/>
    </location>
</feature>
<feature type="binding site" evidence="1">
    <location>
        <begin position="6"/>
        <end position="10"/>
    </location>
    <ligand>
        <name>ATP</name>
        <dbReference type="ChEBI" id="CHEBI:30616"/>
    </ligand>
</feature>
<feature type="binding site" evidence="1">
    <location>
        <begin position="139"/>
        <end position="146"/>
    </location>
    <ligand>
        <name>ATP</name>
        <dbReference type="ChEBI" id="CHEBI:30616"/>
    </ligand>
</feature>
<feature type="binding site" evidence="1">
    <location>
        <position position="177"/>
    </location>
    <ligand>
        <name>ATP</name>
        <dbReference type="ChEBI" id="CHEBI:30616"/>
    </ligand>
</feature>